<keyword id="KW-0007">Acetylation</keyword>
<keyword id="KW-0009">Actin-binding</keyword>
<keyword id="KW-0903">Direct protein sequencing</keyword>
<keyword id="KW-0488">Methylation</keyword>
<comment type="function">
    <text>Troponin I is the actomyosin ATPase inhibitory subunit present in the thin filament regulatory complex.</text>
</comment>
<comment type="miscellaneous">
    <text>There is a 30 residue long N-terminal tail that does not occur in skeletal muscle TnI's, but is present in cardiac muscle TnI's.</text>
</comment>
<comment type="similarity">
    <text evidence="3">Belongs to the troponin I family.</text>
</comment>
<feature type="chain" id="PRO_0000186161" description="Troponin I">
    <location>
        <begin position="1"/>
        <end position="201"/>
    </location>
</feature>
<feature type="region of interest" description="Disordered" evidence="1">
    <location>
        <begin position="1"/>
        <end position="45"/>
    </location>
</feature>
<feature type="region of interest" description="Troponin T-interaction">
    <location>
        <begin position="108"/>
        <end position="117"/>
    </location>
</feature>
<feature type="region of interest" description="Actin-binding">
    <location>
        <begin position="135"/>
        <end position="148"/>
    </location>
</feature>
<feature type="region of interest" description="Disordered" evidence="1">
    <location>
        <begin position="182"/>
        <end position="201"/>
    </location>
</feature>
<feature type="compositionally biased region" description="Basic and acidic residues" evidence="1">
    <location>
        <begin position="1"/>
        <end position="33"/>
    </location>
</feature>
<feature type="modified residue" description="N-acetylalanine" evidence="4">
    <location>
        <position position="1"/>
    </location>
</feature>
<feature type="modified residue" description="N6,N6,N6-trimethyllysine" evidence="2">
    <location>
        <position position="142"/>
    </location>
</feature>
<feature type="modified residue" description="N6,N6,N6-trimethyllysine" evidence="2">
    <location>
        <position position="146"/>
    </location>
</feature>
<proteinExistence type="evidence at protein level"/>
<organism>
    <name type="scientific">Astacus leptodactylus</name>
    <name type="common">Turkish narrow-clawed crayfish</name>
    <name type="synonym">Pontastacus leptodactylus</name>
    <dbReference type="NCBI Taxonomy" id="6717"/>
    <lineage>
        <taxon>Eukaryota</taxon>
        <taxon>Metazoa</taxon>
        <taxon>Ecdysozoa</taxon>
        <taxon>Arthropoda</taxon>
        <taxon>Crustacea</taxon>
        <taxon>Multicrustacea</taxon>
        <taxon>Malacostraca</taxon>
        <taxon>Eumalacostraca</taxon>
        <taxon>Eucarida</taxon>
        <taxon>Decapoda</taxon>
        <taxon>Pleocyemata</taxon>
        <taxon>Astacidea</taxon>
        <taxon>Astacoidea</taxon>
        <taxon>Astacidae</taxon>
        <taxon>Astacus</taxon>
    </lineage>
</organism>
<sequence length="201" mass="23490">ADKAKAAEEAKKKQDDIDRKKAEVRKRLEEQSLKKQKKGFMTPERKKKLRLLLRKKAAEELKKEQERKAGERRKIIDQRCGQPKNLDGANEEQLRAIIKEYFDHTAQIESDKYDVELEIIRKDYEINELNIQVNDLRGKFIKPTLKKVSKYENKFAKLQKKAAEFNFRNQLKTVKKKEFELEDDKGATEGDGPAAEEVAAE</sequence>
<dbReference type="SMR" id="P05547"/>
<dbReference type="Allergome" id="6097">
    <property type="allergen name" value="Pon l 7"/>
</dbReference>
<dbReference type="Allergome" id="6098">
    <property type="allergen name" value="Pon l 7.0101"/>
</dbReference>
<dbReference type="iPTMnet" id="P05547"/>
<dbReference type="GO" id="GO:0005861">
    <property type="term" value="C:troponin complex"/>
    <property type="evidence" value="ECO:0007669"/>
    <property type="project" value="InterPro"/>
</dbReference>
<dbReference type="GO" id="GO:0003779">
    <property type="term" value="F:actin binding"/>
    <property type="evidence" value="ECO:0007669"/>
    <property type="project" value="UniProtKB-KW"/>
</dbReference>
<dbReference type="GO" id="GO:0006936">
    <property type="term" value="P:muscle contraction"/>
    <property type="evidence" value="ECO:0007669"/>
    <property type="project" value="TreeGrafter"/>
</dbReference>
<dbReference type="FunFam" id="1.20.5.350:FF:000004">
    <property type="entry name" value="WupA, isoform I"/>
    <property type="match status" value="1"/>
</dbReference>
<dbReference type="Gene3D" id="1.20.5.350">
    <property type="match status" value="1"/>
</dbReference>
<dbReference type="InterPro" id="IPR001978">
    <property type="entry name" value="Troponin"/>
</dbReference>
<dbReference type="InterPro" id="IPR050875">
    <property type="entry name" value="Troponin_I"/>
</dbReference>
<dbReference type="InterPro" id="IPR038077">
    <property type="entry name" value="Troponin_sf"/>
</dbReference>
<dbReference type="PANTHER" id="PTHR13738">
    <property type="entry name" value="TROPONIN I"/>
    <property type="match status" value="1"/>
</dbReference>
<dbReference type="PANTHER" id="PTHR13738:SF1">
    <property type="entry name" value="TROPONIN I"/>
    <property type="match status" value="1"/>
</dbReference>
<dbReference type="Pfam" id="PF00992">
    <property type="entry name" value="Troponin"/>
    <property type="match status" value="1"/>
</dbReference>
<dbReference type="SUPFAM" id="SSF90250">
    <property type="entry name" value="Troponin coil-coiled subunits"/>
    <property type="match status" value="1"/>
</dbReference>
<accession>P05547</accession>
<reference key="1">
    <citation type="journal article" date="1989" name="J. Biol. Chem.">
        <title>Amino acid sequence of crayfish troponin I.</title>
        <authorList>
            <person name="Kobayashi T."/>
            <person name="Takagi T."/>
            <person name="Konishi K."/>
            <person name="Cox J.A."/>
        </authorList>
    </citation>
    <scope>PROTEIN SEQUENCE</scope>
    <scope>ACETYLATION AT ALA-1</scope>
    <scope>METHYLATION AT LYS-142 AND LYS-146</scope>
</reference>
<evidence type="ECO:0000256" key="1">
    <source>
        <dbReference type="SAM" id="MobiDB-lite"/>
    </source>
</evidence>
<evidence type="ECO:0000269" key="2">
    <source>
    </source>
</evidence>
<evidence type="ECO:0000305" key="3"/>
<evidence type="ECO:0000305" key="4">
    <source>
    </source>
</evidence>
<protein>
    <recommendedName>
        <fullName>Troponin I</fullName>
        <shortName>TnI</shortName>
    </recommendedName>
</protein>
<name>TNNI_ASTLP</name>